<sequence length="124" mass="14033">MLKIGKLLTSSFFSYFLIGIVNTALHWGVFYACYNNLAFGQGRSNIVGFICAATFSFFANARCSFKVSATKARYFIFIFFMGAMSYLFGVLFDLLALSPIFTLFTFSLFSLVLGYCASKYFIFR</sequence>
<proteinExistence type="inferred from homology"/>
<comment type="function">
    <text evidence="1">Involved in O antigen modification. Involved in the translocation of bactoprenol-linked glucose across the cytoplasmic membrane (By similarity).</text>
</comment>
<comment type="pathway">
    <text>Bacterial outer membrane biogenesis; lipopolysaccharide biosynthesis.</text>
</comment>
<comment type="subcellular location">
    <subcellularLocation>
        <location evidence="3">Cell membrane</location>
        <topology evidence="3">Multi-pass membrane protein</topology>
    </subcellularLocation>
</comment>
<comment type="similarity">
    <text evidence="3">Belongs to the GtrA family.</text>
</comment>
<protein>
    <recommendedName>
        <fullName>Bactoprenol-linked glucose translocase</fullName>
    </recommendedName>
</protein>
<reference key="1">
    <citation type="journal article" date="1994" name="J. Bacteriol.">
        <title>Characterization of the rfc region of Shigella flexneri.</title>
        <authorList>
            <person name="Morona R."/>
            <person name="Mavris M."/>
            <person name="Fallarino A."/>
            <person name="Manning P.A."/>
        </authorList>
    </citation>
    <scope>NUCLEOTIDE SEQUENCE [GENOMIC DNA]</scope>
    <source>
        <strain>PE577 / Serotype 2a</strain>
    </source>
</reference>
<reference key="2">
    <citation type="journal article" date="2002" name="Nucleic Acids Res.">
        <title>Genome sequence of Shigella flexneri 2a: insights into pathogenicity through comparison with genomes of Escherichia coli K12 and O157.</title>
        <authorList>
            <person name="Jin Q."/>
            <person name="Yuan Z."/>
            <person name="Xu J."/>
            <person name="Wang Y."/>
            <person name="Shen Y."/>
            <person name="Lu W."/>
            <person name="Wang J."/>
            <person name="Liu H."/>
            <person name="Yang J."/>
            <person name="Yang F."/>
            <person name="Zhang X."/>
            <person name="Zhang J."/>
            <person name="Yang G."/>
            <person name="Wu H."/>
            <person name="Qu D."/>
            <person name="Dong J."/>
            <person name="Sun L."/>
            <person name="Xue Y."/>
            <person name="Zhao A."/>
            <person name="Gao Y."/>
            <person name="Zhu J."/>
            <person name="Kan B."/>
            <person name="Ding K."/>
            <person name="Chen S."/>
            <person name="Cheng H."/>
            <person name="Yao Z."/>
            <person name="He B."/>
            <person name="Chen R."/>
            <person name="Ma D."/>
            <person name="Qiang B."/>
            <person name="Wen Y."/>
            <person name="Hou Y."/>
            <person name="Yu J."/>
        </authorList>
    </citation>
    <scope>NUCLEOTIDE SEQUENCE [LARGE SCALE GENOMIC DNA]</scope>
    <source>
        <strain>301 / Serotype 2a</strain>
    </source>
</reference>
<reference key="3">
    <citation type="journal article" date="2003" name="Infect. Immun.">
        <title>Complete genome sequence and comparative genomics of Shigella flexneri serotype 2a strain 2457T.</title>
        <authorList>
            <person name="Wei J."/>
            <person name="Goldberg M.B."/>
            <person name="Burland V."/>
            <person name="Venkatesan M.M."/>
            <person name="Deng W."/>
            <person name="Fournier G."/>
            <person name="Mayhew G.F."/>
            <person name="Plunkett G. III"/>
            <person name="Rose D.J."/>
            <person name="Darling A."/>
            <person name="Mau B."/>
            <person name="Perna N.T."/>
            <person name="Payne S.M."/>
            <person name="Runyen-Janecky L.J."/>
            <person name="Zhou S."/>
            <person name="Schwartz D.C."/>
            <person name="Blattner F.R."/>
        </authorList>
    </citation>
    <scope>NUCLEOTIDE SEQUENCE [LARGE SCALE GENOMIC DNA]</scope>
    <source>
        <strain>ATCC 700930 / 2457T / Serotype 2a</strain>
    </source>
</reference>
<dbReference type="EMBL" id="X71970">
    <property type="protein sequence ID" value="CAA50775.1"/>
    <property type="molecule type" value="Genomic_DNA"/>
</dbReference>
<dbReference type="EMBL" id="AE005674">
    <property type="protein sequence ID" value="AAN43635.1"/>
    <property type="molecule type" value="Genomic_DNA"/>
</dbReference>
<dbReference type="EMBL" id="AE014073">
    <property type="protein sequence ID" value="AAP17464.1"/>
    <property type="molecule type" value="Genomic_DNA"/>
</dbReference>
<dbReference type="PIR" id="D36966">
    <property type="entry name" value="D36966"/>
</dbReference>
<dbReference type="RefSeq" id="NP_707928.1">
    <property type="nucleotide sequence ID" value="NC_004337.2"/>
</dbReference>
<dbReference type="RefSeq" id="WP_011069435.1">
    <property type="nucleotide sequence ID" value="NZ_WPGV01000030.1"/>
</dbReference>
<dbReference type="STRING" id="198214.SF2096"/>
<dbReference type="PaxDb" id="198214-SF2096"/>
<dbReference type="GeneID" id="1025291"/>
<dbReference type="KEGG" id="sfl:SF2096"/>
<dbReference type="KEGG" id="sfx:S2218"/>
<dbReference type="PATRIC" id="fig|198214.7.peg.2504"/>
<dbReference type="HOGENOM" id="CLU_141008_0_0_6"/>
<dbReference type="UniPathway" id="UPA00030"/>
<dbReference type="Proteomes" id="UP000001006">
    <property type="component" value="Chromosome"/>
</dbReference>
<dbReference type="Proteomes" id="UP000002673">
    <property type="component" value="Chromosome"/>
</dbReference>
<dbReference type="GO" id="GO:0005886">
    <property type="term" value="C:plasma membrane"/>
    <property type="evidence" value="ECO:0007669"/>
    <property type="project" value="UniProtKB-SubCell"/>
</dbReference>
<dbReference type="GO" id="GO:0009103">
    <property type="term" value="P:lipopolysaccharide biosynthetic process"/>
    <property type="evidence" value="ECO:0007669"/>
    <property type="project" value="UniProtKB-UniPathway"/>
</dbReference>
<dbReference type="InterPro" id="IPR016480">
    <property type="entry name" value="Glc_translocase_bactprenl-link"/>
</dbReference>
<dbReference type="InterPro" id="IPR051401">
    <property type="entry name" value="GtrA_CellWall_Glycosyl"/>
</dbReference>
<dbReference type="InterPro" id="IPR007267">
    <property type="entry name" value="GtrA_DPMS_TM"/>
</dbReference>
<dbReference type="PANTHER" id="PTHR38459">
    <property type="entry name" value="PROPHAGE BACTOPRENOL-LINKED GLUCOSE TRANSLOCASE HOMOLOG"/>
    <property type="match status" value="1"/>
</dbReference>
<dbReference type="PANTHER" id="PTHR38459:SF1">
    <property type="entry name" value="PROPHAGE BACTOPRENOL-LINKED GLUCOSE TRANSLOCASE HOMOLOG"/>
    <property type="match status" value="1"/>
</dbReference>
<dbReference type="Pfam" id="PF04138">
    <property type="entry name" value="GtrA_DPMS_TM"/>
    <property type="match status" value="1"/>
</dbReference>
<dbReference type="PIRSF" id="PIRSF006298">
    <property type="entry name" value="GtrA_prd"/>
    <property type="match status" value="1"/>
</dbReference>
<accession>P37785</accession>
<evidence type="ECO:0000250" key="1"/>
<evidence type="ECO:0000255" key="2"/>
<evidence type="ECO:0000305" key="3"/>
<organism>
    <name type="scientific">Shigella flexneri</name>
    <dbReference type="NCBI Taxonomy" id="623"/>
    <lineage>
        <taxon>Bacteria</taxon>
        <taxon>Pseudomonadati</taxon>
        <taxon>Pseudomonadota</taxon>
        <taxon>Gammaproteobacteria</taxon>
        <taxon>Enterobacterales</taxon>
        <taxon>Enterobacteriaceae</taxon>
        <taxon>Shigella</taxon>
    </lineage>
</organism>
<name>GTRA_SHIFL</name>
<keyword id="KW-1003">Cell membrane</keyword>
<keyword id="KW-0448">Lipopolysaccharide biosynthesis</keyword>
<keyword id="KW-0472">Membrane</keyword>
<keyword id="KW-1185">Reference proteome</keyword>
<keyword id="KW-0812">Transmembrane</keyword>
<keyword id="KW-1133">Transmembrane helix</keyword>
<keyword id="KW-0813">Transport</keyword>
<feature type="chain" id="PRO_0000212251" description="Bactoprenol-linked glucose translocase">
    <location>
        <begin position="1"/>
        <end position="124"/>
    </location>
</feature>
<feature type="transmembrane region" description="Helical" evidence="2">
    <location>
        <begin position="12"/>
        <end position="32"/>
    </location>
</feature>
<feature type="transmembrane region" description="Helical" evidence="2">
    <location>
        <begin position="45"/>
        <end position="65"/>
    </location>
</feature>
<feature type="transmembrane region" description="Helical" evidence="2">
    <location>
        <begin position="75"/>
        <end position="95"/>
    </location>
</feature>
<feature type="transmembrane region" description="Helical" evidence="2">
    <location>
        <begin position="96"/>
        <end position="116"/>
    </location>
</feature>
<gene>
    <name type="primary">rfbI</name>
    <name type="ordered locus">SF2096</name>
    <name type="ordered locus">S2218</name>
</gene>